<dbReference type="EMBL" id="Z69371">
    <property type="protein sequence ID" value="CAA93320.1"/>
    <property type="molecule type" value="Genomic_DNA"/>
</dbReference>
<dbReference type="EMBL" id="AL009126">
    <property type="protein sequence ID" value="CAB14687.1"/>
    <property type="molecule type" value="Genomic_DNA"/>
</dbReference>
<dbReference type="PIR" id="F69633">
    <property type="entry name" value="F69633"/>
</dbReference>
<dbReference type="RefSeq" id="NP_390623.1">
    <property type="nucleotide sequence ID" value="NC_000964.3"/>
</dbReference>
<dbReference type="RefSeq" id="WP_003229784.1">
    <property type="nucleotide sequence ID" value="NZ_OZ025638.1"/>
</dbReference>
<dbReference type="SMR" id="O34606"/>
<dbReference type="FunCoup" id="O34606">
    <property type="interactions" value="125"/>
</dbReference>
<dbReference type="STRING" id="224308.BSU27460"/>
<dbReference type="PaxDb" id="224308-BSU27460"/>
<dbReference type="EnsemblBacteria" id="CAB14687">
    <property type="protein sequence ID" value="CAB14687"/>
    <property type="gene ID" value="BSU_27460"/>
</dbReference>
<dbReference type="GeneID" id="937556"/>
<dbReference type="KEGG" id="bsu:BSU27460"/>
<dbReference type="PATRIC" id="fig|224308.179.peg.2982"/>
<dbReference type="eggNOG" id="COG0765">
    <property type="taxonomic scope" value="Bacteria"/>
</dbReference>
<dbReference type="InParanoid" id="O34606"/>
<dbReference type="OrthoDB" id="9805999at2"/>
<dbReference type="PhylomeDB" id="O34606"/>
<dbReference type="BioCyc" id="BSUB:BSU27460-MONOMER"/>
<dbReference type="Proteomes" id="UP000001570">
    <property type="component" value="Chromosome"/>
</dbReference>
<dbReference type="GO" id="GO:0043190">
    <property type="term" value="C:ATP-binding cassette (ABC) transporter complex"/>
    <property type="evidence" value="ECO:0007669"/>
    <property type="project" value="InterPro"/>
</dbReference>
<dbReference type="GO" id="GO:0005886">
    <property type="term" value="C:plasma membrane"/>
    <property type="evidence" value="ECO:0000318"/>
    <property type="project" value="GO_Central"/>
</dbReference>
<dbReference type="GO" id="GO:0022857">
    <property type="term" value="F:transmembrane transporter activity"/>
    <property type="evidence" value="ECO:0007669"/>
    <property type="project" value="InterPro"/>
</dbReference>
<dbReference type="GO" id="GO:0006865">
    <property type="term" value="P:amino acid transport"/>
    <property type="evidence" value="ECO:0000318"/>
    <property type="project" value="GO_Central"/>
</dbReference>
<dbReference type="CDD" id="cd06261">
    <property type="entry name" value="TM_PBP2"/>
    <property type="match status" value="1"/>
</dbReference>
<dbReference type="FunFam" id="1.10.3720.10:FF:000033">
    <property type="entry name" value="Polar amino acid ABC transporter permease"/>
    <property type="match status" value="1"/>
</dbReference>
<dbReference type="Gene3D" id="1.10.3720.10">
    <property type="entry name" value="MetI-like"/>
    <property type="match status" value="1"/>
</dbReference>
<dbReference type="InterPro" id="IPR010065">
    <property type="entry name" value="AA_ABC_transptr_permease_3TM"/>
</dbReference>
<dbReference type="InterPro" id="IPR043429">
    <property type="entry name" value="ArtM/GltK/GlnP/TcyL/YhdX-like"/>
</dbReference>
<dbReference type="InterPro" id="IPR000515">
    <property type="entry name" value="MetI-like"/>
</dbReference>
<dbReference type="InterPro" id="IPR035906">
    <property type="entry name" value="MetI-like_sf"/>
</dbReference>
<dbReference type="NCBIfam" id="TIGR01726">
    <property type="entry name" value="HEQRo_perm_3TM"/>
    <property type="match status" value="1"/>
</dbReference>
<dbReference type="PANTHER" id="PTHR30614:SF41">
    <property type="entry name" value="INNER MEMBRANE AMINO-ACID ABC TRANSPORTER PERMEASE PROTEIN YHDY"/>
    <property type="match status" value="1"/>
</dbReference>
<dbReference type="PANTHER" id="PTHR30614">
    <property type="entry name" value="MEMBRANE COMPONENT OF AMINO ACID ABC TRANSPORTER"/>
    <property type="match status" value="1"/>
</dbReference>
<dbReference type="Pfam" id="PF00528">
    <property type="entry name" value="BPD_transp_1"/>
    <property type="match status" value="1"/>
</dbReference>
<dbReference type="SUPFAM" id="SSF161098">
    <property type="entry name" value="MetI-like"/>
    <property type="match status" value="1"/>
</dbReference>
<dbReference type="PROSITE" id="PS50928">
    <property type="entry name" value="ABC_TM1"/>
    <property type="match status" value="1"/>
</dbReference>
<protein>
    <recommendedName>
        <fullName>Probable glutamine ABC transporter permease protein GlnP</fullName>
    </recommendedName>
</protein>
<accession>O34606</accession>
<accession>Q798Q9</accession>
<name>GLNP_BACSU</name>
<proteinExistence type="evidence at transcript level"/>
<feature type="chain" id="PRO_0000376834" description="Probable glutamine ABC transporter permease protein GlnP">
    <location>
        <begin position="1"/>
        <end position="218"/>
    </location>
</feature>
<feature type="transmembrane region" description="Helical" evidence="2">
    <location>
        <begin position="19"/>
        <end position="39"/>
    </location>
</feature>
<feature type="transmembrane region" description="Helical" evidence="2">
    <location>
        <begin position="65"/>
        <end position="85"/>
    </location>
</feature>
<feature type="transmembrane region" description="Helical" evidence="2">
    <location>
        <begin position="188"/>
        <end position="208"/>
    </location>
</feature>
<feature type="domain" description="ABC transmembrane type-1" evidence="2">
    <location>
        <begin position="19"/>
        <end position="210"/>
    </location>
</feature>
<comment type="function">
    <text evidence="1">Part of the ABC transporter complex GlnHMPQ involved in glutamine transport. Probably responsible for the translocation of the substrate across the membrane (By similarity).</text>
</comment>
<comment type="subunit">
    <text evidence="4">The complex is composed of two ATP-binding proteins (GlnQ), two transmembrane proteins (GlnM and GlnP) and a solute-binding protein (GlnH).</text>
</comment>
<comment type="subcellular location">
    <subcellularLocation>
        <location evidence="1">Cell membrane</location>
        <topology evidence="2">Multi-pass membrane protein</topology>
    </subcellularLocation>
</comment>
<comment type="induction">
    <text evidence="3">Positively regulated by TnrA under nitrogen-limited conditions.</text>
</comment>
<comment type="similarity">
    <text evidence="4">Belongs to the binding-protein-dependent transport system permease family.</text>
</comment>
<sequence length="218" mass="24165">MDFIGAYSQEHLAFLWDGFLVTLYVAFISIILSFFFGLIAGTLRYAKVPVLSQLIAVLVETIRNLPLLLIIFFTFFALPEIGIKLEITAAAITALTIFESAMLSEIIRSGLKSIDKGQIEAARSSGLSYTQTLFFIVMPQALRRMVPPIVSQFISLLKDTSLAVVIALPELIHNAQIINGQSADGSYFFPIFLLAALMYFAVNYSLSLAARRLEVRQT</sequence>
<gene>
    <name type="primary">glnP</name>
    <name type="ordered locus">BSU27460</name>
</gene>
<organism>
    <name type="scientific">Bacillus subtilis (strain 168)</name>
    <dbReference type="NCBI Taxonomy" id="224308"/>
    <lineage>
        <taxon>Bacteria</taxon>
        <taxon>Bacillati</taxon>
        <taxon>Bacillota</taxon>
        <taxon>Bacilli</taxon>
        <taxon>Bacillales</taxon>
        <taxon>Bacillaceae</taxon>
        <taxon>Bacillus</taxon>
    </lineage>
</organism>
<keyword id="KW-0029">Amino-acid transport</keyword>
<keyword id="KW-1003">Cell membrane</keyword>
<keyword id="KW-0472">Membrane</keyword>
<keyword id="KW-1185">Reference proteome</keyword>
<keyword id="KW-0812">Transmembrane</keyword>
<keyword id="KW-1133">Transmembrane helix</keyword>
<keyword id="KW-0813">Transport</keyword>
<evidence type="ECO:0000250" key="1"/>
<evidence type="ECO:0000255" key="2">
    <source>
        <dbReference type="PROSITE-ProRule" id="PRU00441"/>
    </source>
</evidence>
<evidence type="ECO:0000269" key="3">
    <source>
    </source>
</evidence>
<evidence type="ECO:0000305" key="4"/>
<reference key="1">
    <citation type="journal article" date="1995" name="Microbiology">
        <title>An operon encoding a novel ABC-type transport system in Bacillus subtilis.</title>
        <authorList>
            <person name="Rodriguez F."/>
            <person name="Grandi G."/>
        </authorList>
    </citation>
    <scope>NUCLEOTIDE SEQUENCE [GENOMIC DNA]</scope>
    <source>
        <strain>168</strain>
    </source>
</reference>
<reference key="2">
    <citation type="journal article" date="1997" name="Nature">
        <title>The complete genome sequence of the Gram-positive bacterium Bacillus subtilis.</title>
        <authorList>
            <person name="Kunst F."/>
            <person name="Ogasawara N."/>
            <person name="Moszer I."/>
            <person name="Albertini A.M."/>
            <person name="Alloni G."/>
            <person name="Azevedo V."/>
            <person name="Bertero M.G."/>
            <person name="Bessieres P."/>
            <person name="Bolotin A."/>
            <person name="Borchert S."/>
            <person name="Borriss R."/>
            <person name="Boursier L."/>
            <person name="Brans A."/>
            <person name="Braun M."/>
            <person name="Brignell S.C."/>
            <person name="Bron S."/>
            <person name="Brouillet S."/>
            <person name="Bruschi C.V."/>
            <person name="Caldwell B."/>
            <person name="Capuano V."/>
            <person name="Carter N.M."/>
            <person name="Choi S.-K."/>
            <person name="Codani J.-J."/>
            <person name="Connerton I.F."/>
            <person name="Cummings N.J."/>
            <person name="Daniel R.A."/>
            <person name="Denizot F."/>
            <person name="Devine K.M."/>
            <person name="Duesterhoeft A."/>
            <person name="Ehrlich S.D."/>
            <person name="Emmerson P.T."/>
            <person name="Entian K.-D."/>
            <person name="Errington J."/>
            <person name="Fabret C."/>
            <person name="Ferrari E."/>
            <person name="Foulger D."/>
            <person name="Fritz C."/>
            <person name="Fujita M."/>
            <person name="Fujita Y."/>
            <person name="Fuma S."/>
            <person name="Galizzi A."/>
            <person name="Galleron N."/>
            <person name="Ghim S.-Y."/>
            <person name="Glaser P."/>
            <person name="Goffeau A."/>
            <person name="Golightly E.J."/>
            <person name="Grandi G."/>
            <person name="Guiseppi G."/>
            <person name="Guy B.J."/>
            <person name="Haga K."/>
            <person name="Haiech J."/>
            <person name="Harwood C.R."/>
            <person name="Henaut A."/>
            <person name="Hilbert H."/>
            <person name="Holsappel S."/>
            <person name="Hosono S."/>
            <person name="Hullo M.-F."/>
            <person name="Itaya M."/>
            <person name="Jones L.-M."/>
            <person name="Joris B."/>
            <person name="Karamata D."/>
            <person name="Kasahara Y."/>
            <person name="Klaerr-Blanchard M."/>
            <person name="Klein C."/>
            <person name="Kobayashi Y."/>
            <person name="Koetter P."/>
            <person name="Koningstein G."/>
            <person name="Krogh S."/>
            <person name="Kumano M."/>
            <person name="Kurita K."/>
            <person name="Lapidus A."/>
            <person name="Lardinois S."/>
            <person name="Lauber J."/>
            <person name="Lazarevic V."/>
            <person name="Lee S.-M."/>
            <person name="Levine A."/>
            <person name="Liu H."/>
            <person name="Masuda S."/>
            <person name="Mauel C."/>
            <person name="Medigue C."/>
            <person name="Medina N."/>
            <person name="Mellado R.P."/>
            <person name="Mizuno M."/>
            <person name="Moestl D."/>
            <person name="Nakai S."/>
            <person name="Noback M."/>
            <person name="Noone D."/>
            <person name="O'Reilly M."/>
            <person name="Ogawa K."/>
            <person name="Ogiwara A."/>
            <person name="Oudega B."/>
            <person name="Park S.-H."/>
            <person name="Parro V."/>
            <person name="Pohl T.M."/>
            <person name="Portetelle D."/>
            <person name="Porwollik S."/>
            <person name="Prescott A.M."/>
            <person name="Presecan E."/>
            <person name="Pujic P."/>
            <person name="Purnelle B."/>
            <person name="Rapoport G."/>
            <person name="Rey M."/>
            <person name="Reynolds S."/>
            <person name="Rieger M."/>
            <person name="Rivolta C."/>
            <person name="Rocha E."/>
            <person name="Roche B."/>
            <person name="Rose M."/>
            <person name="Sadaie Y."/>
            <person name="Sato T."/>
            <person name="Scanlan E."/>
            <person name="Schleich S."/>
            <person name="Schroeter R."/>
            <person name="Scoffone F."/>
            <person name="Sekiguchi J."/>
            <person name="Sekowska A."/>
            <person name="Seror S.J."/>
            <person name="Serror P."/>
            <person name="Shin B.-S."/>
            <person name="Soldo B."/>
            <person name="Sorokin A."/>
            <person name="Tacconi E."/>
            <person name="Takagi T."/>
            <person name="Takahashi H."/>
            <person name="Takemaru K."/>
            <person name="Takeuchi M."/>
            <person name="Tamakoshi A."/>
            <person name="Tanaka T."/>
            <person name="Terpstra P."/>
            <person name="Tognoni A."/>
            <person name="Tosato V."/>
            <person name="Uchiyama S."/>
            <person name="Vandenbol M."/>
            <person name="Vannier F."/>
            <person name="Vassarotti A."/>
            <person name="Viari A."/>
            <person name="Wambutt R."/>
            <person name="Wedler E."/>
            <person name="Wedler H."/>
            <person name="Weitzenegger T."/>
            <person name="Winters P."/>
            <person name="Wipat A."/>
            <person name="Yamamoto H."/>
            <person name="Yamane K."/>
            <person name="Yasumoto K."/>
            <person name="Yata K."/>
            <person name="Yoshida K."/>
            <person name="Yoshikawa H.-F."/>
            <person name="Zumstein E."/>
            <person name="Yoshikawa H."/>
            <person name="Danchin A."/>
        </authorList>
    </citation>
    <scope>NUCLEOTIDE SEQUENCE [LARGE SCALE GENOMIC DNA]</scope>
    <source>
        <strain>168</strain>
    </source>
</reference>
<reference key="3">
    <citation type="journal article" date="2003" name="Mol. Microbiol.">
        <title>Identification of additional TnrA-regulated genes of Bacillus subtilis associated with a TnrA box.</title>
        <authorList>
            <person name="Yoshida K."/>
            <person name="Yamaguchi H."/>
            <person name="Kinehara M."/>
            <person name="Ohki Y.-H."/>
            <person name="Nakaura Y."/>
            <person name="Fujita Y."/>
        </authorList>
    </citation>
    <scope>INDUCTION BY TNRA</scope>
</reference>